<protein>
    <recommendedName>
        <fullName evidence="1">Photosystem II protein D1</fullName>
        <shortName evidence="1">PSII D1 protein</shortName>
        <ecNumber evidence="1">1.10.3.9</ecNumber>
    </recommendedName>
    <alternativeName>
        <fullName evidence="1">Photosystem II Q(B) protein</fullName>
    </alternativeName>
</protein>
<keyword id="KW-0007">Acetylation</keyword>
<keyword id="KW-0106">Calcium</keyword>
<keyword id="KW-0148">Chlorophyll</keyword>
<keyword id="KW-0150">Chloroplast</keyword>
<keyword id="KW-0157">Chromophore</keyword>
<keyword id="KW-0249">Electron transport</keyword>
<keyword id="KW-0359">Herbicide resistance</keyword>
<keyword id="KW-0408">Iron</keyword>
<keyword id="KW-0460">Magnesium</keyword>
<keyword id="KW-0464">Manganese</keyword>
<keyword id="KW-0472">Membrane</keyword>
<keyword id="KW-0479">Metal-binding</keyword>
<keyword id="KW-0560">Oxidoreductase</keyword>
<keyword id="KW-0597">Phosphoprotein</keyword>
<keyword id="KW-0602">Photosynthesis</keyword>
<keyword id="KW-0604">Photosystem II</keyword>
<keyword id="KW-0934">Plastid</keyword>
<keyword id="KW-0793">Thylakoid</keyword>
<keyword id="KW-0812">Transmembrane</keyword>
<keyword id="KW-1133">Transmembrane helix</keyword>
<keyword id="KW-0813">Transport</keyword>
<name>PSBA_NEPOL</name>
<accession>Q9TL35</accession>
<geneLocation type="chloroplast"/>
<reference key="1">
    <citation type="journal article" date="1999" name="Proc. Natl. Acad. Sci. U.S.A.">
        <title>The complete chloroplast DNA sequence of the green alga Nephroselmis olivacea: insights into the architecture of ancestral chloroplast genomes.</title>
        <authorList>
            <person name="Turmel M."/>
            <person name="Otis C."/>
            <person name="Lemieux C."/>
        </authorList>
    </citation>
    <scope>NUCLEOTIDE SEQUENCE [LARGE SCALE GENOMIC DNA]</scope>
    <source>
        <strain>NIES-484 / S-N-5-8</strain>
    </source>
</reference>
<feature type="initiator methionine" description="Removed" evidence="1">
    <location>
        <position position="1"/>
    </location>
</feature>
<feature type="chain" id="PRO_0000090453" description="Photosystem II protein D1" evidence="1">
    <location>
        <begin position="2"/>
        <end position="344"/>
    </location>
</feature>
<feature type="propeptide" id="PRO_0000316463" evidence="1">
    <location>
        <begin position="345"/>
        <end position="353"/>
    </location>
</feature>
<feature type="transmembrane region" description="Helical" evidence="1">
    <location>
        <begin position="29"/>
        <end position="46"/>
    </location>
</feature>
<feature type="transmembrane region" description="Helical" evidence="1">
    <location>
        <begin position="118"/>
        <end position="133"/>
    </location>
</feature>
<feature type="transmembrane region" description="Helical" evidence="1">
    <location>
        <begin position="142"/>
        <end position="156"/>
    </location>
</feature>
<feature type="transmembrane region" description="Helical" evidence="1">
    <location>
        <begin position="197"/>
        <end position="218"/>
    </location>
</feature>
<feature type="transmembrane region" description="Helical" evidence="1">
    <location>
        <begin position="274"/>
        <end position="288"/>
    </location>
</feature>
<feature type="binding site" description="axial binding residue" evidence="1">
    <location>
        <position position="118"/>
    </location>
    <ligand>
        <name>chlorophyll a</name>
        <dbReference type="ChEBI" id="CHEBI:58416"/>
        <label>ChlzD1</label>
    </ligand>
    <ligandPart>
        <name>Mg</name>
        <dbReference type="ChEBI" id="CHEBI:25107"/>
    </ligandPart>
</feature>
<feature type="binding site" evidence="1">
    <location>
        <position position="126"/>
    </location>
    <ligand>
        <name>pheophytin a</name>
        <dbReference type="ChEBI" id="CHEBI:136840"/>
        <label>D1</label>
    </ligand>
</feature>
<feature type="binding site" evidence="1">
    <location>
        <position position="170"/>
    </location>
    <ligand>
        <name>[CaMn4O5] cluster</name>
        <dbReference type="ChEBI" id="CHEBI:189552"/>
    </ligand>
</feature>
<feature type="binding site" evidence="1">
    <location>
        <position position="189"/>
    </location>
    <ligand>
        <name>[CaMn4O5] cluster</name>
        <dbReference type="ChEBI" id="CHEBI:189552"/>
    </ligand>
</feature>
<feature type="binding site" description="axial binding residue" evidence="1">
    <location>
        <position position="198"/>
    </location>
    <ligand>
        <name>chlorophyll a</name>
        <dbReference type="ChEBI" id="CHEBI:58416"/>
        <label>PD1</label>
    </ligand>
    <ligandPart>
        <name>Mg</name>
        <dbReference type="ChEBI" id="CHEBI:25107"/>
    </ligandPart>
</feature>
<feature type="binding site" evidence="1">
    <location>
        <position position="215"/>
    </location>
    <ligand>
        <name>a quinone</name>
        <dbReference type="ChEBI" id="CHEBI:132124"/>
        <label>B</label>
    </ligand>
</feature>
<feature type="binding site" evidence="1">
    <location>
        <position position="215"/>
    </location>
    <ligand>
        <name>Fe cation</name>
        <dbReference type="ChEBI" id="CHEBI:24875"/>
        <note>ligand shared with heterodimeric partner</note>
    </ligand>
</feature>
<feature type="binding site" evidence="1">
    <location>
        <begin position="264"/>
        <end position="265"/>
    </location>
    <ligand>
        <name>a quinone</name>
        <dbReference type="ChEBI" id="CHEBI:132124"/>
        <label>B</label>
    </ligand>
</feature>
<feature type="binding site" evidence="1">
    <location>
        <position position="272"/>
    </location>
    <ligand>
        <name>Fe cation</name>
        <dbReference type="ChEBI" id="CHEBI:24875"/>
        <note>ligand shared with heterodimeric partner</note>
    </ligand>
</feature>
<feature type="binding site" evidence="1">
    <location>
        <position position="332"/>
    </location>
    <ligand>
        <name>[CaMn4O5] cluster</name>
        <dbReference type="ChEBI" id="CHEBI:189552"/>
    </ligand>
</feature>
<feature type="binding site" evidence="1">
    <location>
        <position position="333"/>
    </location>
    <ligand>
        <name>[CaMn4O5] cluster</name>
        <dbReference type="ChEBI" id="CHEBI:189552"/>
    </ligand>
</feature>
<feature type="binding site" evidence="1">
    <location>
        <position position="342"/>
    </location>
    <ligand>
        <name>[CaMn4O5] cluster</name>
        <dbReference type="ChEBI" id="CHEBI:189552"/>
    </ligand>
</feature>
<feature type="binding site" evidence="1">
    <location>
        <position position="344"/>
    </location>
    <ligand>
        <name>[CaMn4O5] cluster</name>
        <dbReference type="ChEBI" id="CHEBI:189552"/>
    </ligand>
</feature>
<feature type="site" description="Tyrosine radical intermediate" evidence="1">
    <location>
        <position position="161"/>
    </location>
</feature>
<feature type="site" description="Stabilizes free radical intermediate" evidence="1">
    <location>
        <position position="190"/>
    </location>
</feature>
<feature type="site" description="Cleavage; by CTPA" evidence="1">
    <location>
        <begin position="344"/>
        <end position="345"/>
    </location>
</feature>
<feature type="modified residue" description="N-acetylthreonine" evidence="1">
    <location>
        <position position="2"/>
    </location>
</feature>
<feature type="modified residue" description="Phosphothreonine" evidence="1">
    <location>
        <position position="2"/>
    </location>
</feature>
<dbReference type="EC" id="1.10.3.9" evidence="1"/>
<dbReference type="EMBL" id="AF137379">
    <property type="protein sequence ID" value="AAD54781.1"/>
    <property type="molecule type" value="Genomic_DNA"/>
</dbReference>
<dbReference type="RefSeq" id="NP_050810.1">
    <property type="nucleotide sequence ID" value="NC_000927.1"/>
</dbReference>
<dbReference type="SMR" id="Q9TL35"/>
<dbReference type="GeneID" id="801965"/>
<dbReference type="GO" id="GO:0009535">
    <property type="term" value="C:chloroplast thylakoid membrane"/>
    <property type="evidence" value="ECO:0007669"/>
    <property type="project" value="UniProtKB-SubCell"/>
</dbReference>
<dbReference type="GO" id="GO:0009523">
    <property type="term" value="C:photosystem II"/>
    <property type="evidence" value="ECO:0007669"/>
    <property type="project" value="UniProtKB-KW"/>
</dbReference>
<dbReference type="GO" id="GO:0016168">
    <property type="term" value="F:chlorophyll binding"/>
    <property type="evidence" value="ECO:0007669"/>
    <property type="project" value="UniProtKB-UniRule"/>
</dbReference>
<dbReference type="GO" id="GO:0045156">
    <property type="term" value="F:electron transporter, transferring electrons within the cyclic electron transport pathway of photosynthesis activity"/>
    <property type="evidence" value="ECO:0007669"/>
    <property type="project" value="InterPro"/>
</dbReference>
<dbReference type="GO" id="GO:0005506">
    <property type="term" value="F:iron ion binding"/>
    <property type="evidence" value="ECO:0007669"/>
    <property type="project" value="UniProtKB-UniRule"/>
</dbReference>
<dbReference type="GO" id="GO:0016682">
    <property type="term" value="F:oxidoreductase activity, acting on diphenols and related substances as donors, oxygen as acceptor"/>
    <property type="evidence" value="ECO:0007669"/>
    <property type="project" value="UniProtKB-UniRule"/>
</dbReference>
<dbReference type="GO" id="GO:0010242">
    <property type="term" value="F:oxygen evolving activity"/>
    <property type="evidence" value="ECO:0007669"/>
    <property type="project" value="UniProtKB-EC"/>
</dbReference>
<dbReference type="GO" id="GO:0009772">
    <property type="term" value="P:photosynthetic electron transport in photosystem II"/>
    <property type="evidence" value="ECO:0007669"/>
    <property type="project" value="InterPro"/>
</dbReference>
<dbReference type="GO" id="GO:0009635">
    <property type="term" value="P:response to herbicide"/>
    <property type="evidence" value="ECO:0007669"/>
    <property type="project" value="UniProtKB-KW"/>
</dbReference>
<dbReference type="CDD" id="cd09289">
    <property type="entry name" value="Photosystem-II_D1"/>
    <property type="match status" value="1"/>
</dbReference>
<dbReference type="FunFam" id="1.20.85.10:FF:000002">
    <property type="entry name" value="Photosystem II protein D1"/>
    <property type="match status" value="1"/>
</dbReference>
<dbReference type="Gene3D" id="1.20.85.10">
    <property type="entry name" value="Photosystem II protein D1-like"/>
    <property type="match status" value="1"/>
</dbReference>
<dbReference type="HAMAP" id="MF_01379">
    <property type="entry name" value="PSII_PsbA_D1"/>
    <property type="match status" value="1"/>
</dbReference>
<dbReference type="InterPro" id="IPR055266">
    <property type="entry name" value="D1/D2"/>
</dbReference>
<dbReference type="InterPro" id="IPR036854">
    <property type="entry name" value="Photo_II_D1/D2_sf"/>
</dbReference>
<dbReference type="InterPro" id="IPR000484">
    <property type="entry name" value="Photo_RC_L/M"/>
</dbReference>
<dbReference type="InterPro" id="IPR055265">
    <property type="entry name" value="Photo_RC_L/M_CS"/>
</dbReference>
<dbReference type="InterPro" id="IPR005867">
    <property type="entry name" value="PSII_D1"/>
</dbReference>
<dbReference type="NCBIfam" id="TIGR01151">
    <property type="entry name" value="psbA"/>
    <property type="match status" value="1"/>
</dbReference>
<dbReference type="PANTHER" id="PTHR33149:SF12">
    <property type="entry name" value="PHOTOSYSTEM II D2 PROTEIN"/>
    <property type="match status" value="1"/>
</dbReference>
<dbReference type="PANTHER" id="PTHR33149">
    <property type="entry name" value="PHOTOSYSTEM II PROTEIN D1"/>
    <property type="match status" value="1"/>
</dbReference>
<dbReference type="Pfam" id="PF00124">
    <property type="entry name" value="Photo_RC"/>
    <property type="match status" value="1"/>
</dbReference>
<dbReference type="PRINTS" id="PR00256">
    <property type="entry name" value="REACTNCENTRE"/>
</dbReference>
<dbReference type="SUPFAM" id="SSF81483">
    <property type="entry name" value="Bacterial photosystem II reaction centre, L and M subunits"/>
    <property type="match status" value="1"/>
</dbReference>
<dbReference type="PROSITE" id="PS00244">
    <property type="entry name" value="REACTION_CENTER"/>
    <property type="match status" value="1"/>
</dbReference>
<organism>
    <name type="scientific">Nephroselmis olivacea</name>
    <name type="common">Green alga</name>
    <dbReference type="NCBI Taxonomy" id="31312"/>
    <lineage>
        <taxon>Eukaryota</taxon>
        <taxon>Viridiplantae</taxon>
        <taxon>Chlorophyta</taxon>
        <taxon>Nephroselmidophyceae</taxon>
        <taxon>Nephroselmidales</taxon>
        <taxon>Nephroselmidaceae</taxon>
        <taxon>Nephroselmis</taxon>
    </lineage>
</organism>
<sequence>MTAILERRESTSVWARFCDWVTSTENRLYIGWFGVLMIPLLLTATSVFIIGFIAAPPVDIDGIREPVSGSLLFGNNIISGAIIPSSAAIGIHFYPIWEAASIDEWLYNGGCYELIVLHFLLGVACYMGREWELSFRLGMRPWIAVAYSAPVAAATAVFLIYPIGQGSFSDGMPLGISGTFNFMIVFQAEHNILMHPFHMLGVAGVFGGSLFSAMHGSLVTSSLIRETTENESANAGYKFGQEEETYNIVAAHGYFGRLIFQYASFNNSRSLHFFLAAWPVVCIWFTALGVSTMAFNLNGFNFNQSVVDSQGRVINTWADIINRANLGMEVMHERNAHNFPLDLASVDAPAVQG</sequence>
<comment type="function">
    <text evidence="1">Photosystem II (PSII) is a light-driven water:plastoquinone oxidoreductase that uses light energy to abstract electrons from H(2)O, generating O(2) and a proton gradient subsequently used for ATP formation. It consists of a core antenna complex that captures photons, and an electron transfer chain that converts photonic excitation into a charge separation. The D1/D2 (PsbA/PsbD) reaction center heterodimer binds P680, the primary electron donor of PSII as well as several subsequent electron acceptors.</text>
</comment>
<comment type="catalytic activity">
    <reaction evidence="1">
        <text>2 a plastoquinone + 4 hnu + 2 H2O = 2 a plastoquinol + O2</text>
        <dbReference type="Rhea" id="RHEA:36359"/>
        <dbReference type="Rhea" id="RHEA-COMP:9561"/>
        <dbReference type="Rhea" id="RHEA-COMP:9562"/>
        <dbReference type="ChEBI" id="CHEBI:15377"/>
        <dbReference type="ChEBI" id="CHEBI:15379"/>
        <dbReference type="ChEBI" id="CHEBI:17757"/>
        <dbReference type="ChEBI" id="CHEBI:30212"/>
        <dbReference type="ChEBI" id="CHEBI:62192"/>
        <dbReference type="EC" id="1.10.3.9"/>
    </reaction>
</comment>
<comment type="cofactor">
    <text evidence="1">The D1/D2 heterodimer binds P680, chlorophylls that are the primary electron donor of PSII, and subsequent electron acceptors. It shares a non-heme iron and each subunit binds pheophytin, quinone, additional chlorophylls, carotenoids and lipids. D1 provides most of the ligands for the Mn4-Ca-O5 cluster of the oxygen-evolving complex (OEC). There is also a Cl(-1) ion associated with D1 and D2, which is required for oxygen evolution. The PSII complex binds additional chlorophylls, carotenoids and specific lipids.</text>
</comment>
<comment type="subunit">
    <text evidence="1">PSII is composed of 1 copy each of membrane proteins PsbA, PsbB, PsbC, PsbD, PsbE, PsbF, PsbH, PsbI, PsbJ, PsbK, PsbL, PsbM, PsbT, PsbX, PsbY, PsbZ, Psb30/Ycf12, at least 3 peripheral proteins of the oxygen-evolving complex and a large number of cofactors. It forms dimeric complexes.</text>
</comment>
<comment type="subcellular location">
    <subcellularLocation>
        <location evidence="1">Plastid</location>
        <location evidence="1">Chloroplast thylakoid membrane</location>
        <topology evidence="1">Multi-pass membrane protein</topology>
    </subcellularLocation>
</comment>
<comment type="PTM">
    <text evidence="1">Tyr-161 forms a radical intermediate that is referred to as redox-active TyrZ, YZ or Y-Z.</text>
</comment>
<comment type="PTM">
    <text evidence="1">C-terminally processed by CTPA; processing is essential to allow assembly of the oxygen-evolving complex and thus photosynthetic growth.</text>
</comment>
<comment type="miscellaneous">
    <text evidence="1">2 of the reaction center chlorophylls (ChlD1 and ChlD2) are entirely coordinated by water.</text>
</comment>
<comment type="miscellaneous">
    <text evidence="1">Herbicides such as atrazine, BNT, diuron or ioxynil bind in the Q(B) binding site and block subsequent electron transfer.</text>
</comment>
<comment type="similarity">
    <text evidence="1">Belongs to the reaction center PufL/M/PsbA/D family.</text>
</comment>
<proteinExistence type="inferred from homology"/>
<evidence type="ECO:0000255" key="1">
    <source>
        <dbReference type="HAMAP-Rule" id="MF_01379"/>
    </source>
</evidence>
<gene>
    <name evidence="1" type="primary">psbA</name>
</gene>